<reference key="1">
    <citation type="journal article" date="2008" name="BMC Genomics">
        <title>Complete genome of Phenylobacterium zucineum - a novel facultative intracellular bacterium isolated from human erythroleukemia cell line K562.</title>
        <authorList>
            <person name="Luo Y."/>
            <person name="Xu X."/>
            <person name="Ding Z."/>
            <person name="Liu Z."/>
            <person name="Zhang B."/>
            <person name="Yan Z."/>
            <person name="Sun J."/>
            <person name="Hu S."/>
            <person name="Hu X."/>
        </authorList>
    </citation>
    <scope>NUCLEOTIDE SEQUENCE [LARGE SCALE GENOMIC DNA]</scope>
    <source>
        <strain>HLK1</strain>
    </source>
</reference>
<dbReference type="EC" id="4.1.1.37" evidence="1"/>
<dbReference type="EMBL" id="CP000747">
    <property type="protein sequence ID" value="ACG79943.1"/>
    <property type="molecule type" value="Genomic_DNA"/>
</dbReference>
<dbReference type="RefSeq" id="WP_012524081.1">
    <property type="nucleotide sequence ID" value="NC_011144.1"/>
</dbReference>
<dbReference type="SMR" id="B4RD11"/>
<dbReference type="STRING" id="450851.PHZ_c3534"/>
<dbReference type="KEGG" id="pzu:PHZ_c3534"/>
<dbReference type="eggNOG" id="COG0407">
    <property type="taxonomic scope" value="Bacteria"/>
</dbReference>
<dbReference type="HOGENOM" id="CLU_040933_0_0_5"/>
<dbReference type="OrthoDB" id="9806656at2"/>
<dbReference type="UniPathway" id="UPA00251">
    <property type="reaction ID" value="UER00321"/>
</dbReference>
<dbReference type="Proteomes" id="UP000001868">
    <property type="component" value="Chromosome"/>
</dbReference>
<dbReference type="GO" id="GO:0005829">
    <property type="term" value="C:cytosol"/>
    <property type="evidence" value="ECO:0007669"/>
    <property type="project" value="TreeGrafter"/>
</dbReference>
<dbReference type="GO" id="GO:0004853">
    <property type="term" value="F:uroporphyrinogen decarboxylase activity"/>
    <property type="evidence" value="ECO:0007669"/>
    <property type="project" value="UniProtKB-UniRule"/>
</dbReference>
<dbReference type="GO" id="GO:0019353">
    <property type="term" value="P:protoporphyrinogen IX biosynthetic process from glutamate"/>
    <property type="evidence" value="ECO:0007669"/>
    <property type="project" value="TreeGrafter"/>
</dbReference>
<dbReference type="CDD" id="cd00717">
    <property type="entry name" value="URO-D"/>
    <property type="match status" value="1"/>
</dbReference>
<dbReference type="Gene3D" id="3.20.20.210">
    <property type="match status" value="1"/>
</dbReference>
<dbReference type="HAMAP" id="MF_00218">
    <property type="entry name" value="URO_D"/>
    <property type="match status" value="1"/>
</dbReference>
<dbReference type="InterPro" id="IPR038071">
    <property type="entry name" value="UROD/MetE-like_sf"/>
</dbReference>
<dbReference type="InterPro" id="IPR006361">
    <property type="entry name" value="Uroporphyrinogen_deCO2ase_HemE"/>
</dbReference>
<dbReference type="InterPro" id="IPR000257">
    <property type="entry name" value="Uroporphyrinogen_deCOase"/>
</dbReference>
<dbReference type="NCBIfam" id="TIGR01464">
    <property type="entry name" value="hemE"/>
    <property type="match status" value="1"/>
</dbReference>
<dbReference type="PANTHER" id="PTHR21091">
    <property type="entry name" value="METHYLTETRAHYDROFOLATE:HOMOCYSTEINE METHYLTRANSFERASE RELATED"/>
    <property type="match status" value="1"/>
</dbReference>
<dbReference type="PANTHER" id="PTHR21091:SF169">
    <property type="entry name" value="UROPORPHYRINOGEN DECARBOXYLASE"/>
    <property type="match status" value="1"/>
</dbReference>
<dbReference type="Pfam" id="PF01208">
    <property type="entry name" value="URO-D"/>
    <property type="match status" value="1"/>
</dbReference>
<dbReference type="SUPFAM" id="SSF51726">
    <property type="entry name" value="UROD/MetE-like"/>
    <property type="match status" value="1"/>
</dbReference>
<dbReference type="PROSITE" id="PS00906">
    <property type="entry name" value="UROD_1"/>
    <property type="match status" value="1"/>
</dbReference>
<comment type="function">
    <text evidence="1">Catalyzes the decarboxylation of four acetate groups of uroporphyrinogen-III to yield coproporphyrinogen-III.</text>
</comment>
<comment type="catalytic activity">
    <reaction evidence="1">
        <text>uroporphyrinogen III + 4 H(+) = coproporphyrinogen III + 4 CO2</text>
        <dbReference type="Rhea" id="RHEA:19865"/>
        <dbReference type="ChEBI" id="CHEBI:15378"/>
        <dbReference type="ChEBI" id="CHEBI:16526"/>
        <dbReference type="ChEBI" id="CHEBI:57308"/>
        <dbReference type="ChEBI" id="CHEBI:57309"/>
        <dbReference type="EC" id="4.1.1.37"/>
    </reaction>
</comment>
<comment type="pathway">
    <text evidence="1">Porphyrin-containing compound metabolism; protoporphyrin-IX biosynthesis; coproporphyrinogen-III from 5-aminolevulinate: step 4/4.</text>
</comment>
<comment type="subunit">
    <text evidence="1">Homodimer.</text>
</comment>
<comment type="subcellular location">
    <subcellularLocation>
        <location evidence="1">Cytoplasm</location>
    </subcellularLocation>
</comment>
<comment type="similarity">
    <text evidence="1">Belongs to the uroporphyrinogen decarboxylase family.</text>
</comment>
<sequence length="345" mass="37482">MSTPPPKLLRALAGETLERPPIWFMRQAGRSLPEYRELRSRAKDFIAFCLDPEMAAEATLQPMRRFPMDGAIVFADILLIPLALGQDVWFEAGEGPKLGELPPIEALRDQVEASTGRLSAVGETLARVRAELEPDRALIGFAGAPWTVATYMLERKGSEREAARAYAYAHPDELDALLDVLVDATARYLVMQAKAGAQALKLFESWAESLSEDVFERIVVRPHAAIVEKVRAAGVTVPIIGFPRGAGAQVETYAEGVPVEGIALDVQATAALGRRLQAQGRCIQGALDNLLLREGGPALDARVDQLLAQWGDGPWIFNLGHGVLPDTPIENIARVVSRVTGKPVR</sequence>
<name>DCUP_PHEZH</name>
<keyword id="KW-0963">Cytoplasm</keyword>
<keyword id="KW-0210">Decarboxylase</keyword>
<keyword id="KW-0456">Lyase</keyword>
<keyword id="KW-0627">Porphyrin biosynthesis</keyword>
<keyword id="KW-1185">Reference proteome</keyword>
<accession>B4RD11</accession>
<gene>
    <name evidence="1" type="primary">hemE</name>
    <name type="ordered locus">PHZ_c3534</name>
</gene>
<evidence type="ECO:0000255" key="1">
    <source>
        <dbReference type="HAMAP-Rule" id="MF_00218"/>
    </source>
</evidence>
<organism>
    <name type="scientific">Phenylobacterium zucineum (strain HLK1)</name>
    <dbReference type="NCBI Taxonomy" id="450851"/>
    <lineage>
        <taxon>Bacteria</taxon>
        <taxon>Pseudomonadati</taxon>
        <taxon>Pseudomonadota</taxon>
        <taxon>Alphaproteobacteria</taxon>
        <taxon>Caulobacterales</taxon>
        <taxon>Caulobacteraceae</taxon>
        <taxon>Phenylobacterium</taxon>
    </lineage>
</organism>
<proteinExistence type="inferred from homology"/>
<feature type="chain" id="PRO_1000197532" description="Uroporphyrinogen decarboxylase">
    <location>
        <begin position="1"/>
        <end position="345"/>
    </location>
</feature>
<feature type="binding site" evidence="1">
    <location>
        <begin position="26"/>
        <end position="30"/>
    </location>
    <ligand>
        <name>substrate</name>
    </ligand>
</feature>
<feature type="binding site" evidence="1">
    <location>
        <position position="76"/>
    </location>
    <ligand>
        <name>substrate</name>
    </ligand>
</feature>
<feature type="binding site" evidence="1">
    <location>
        <position position="151"/>
    </location>
    <ligand>
        <name>substrate</name>
    </ligand>
</feature>
<feature type="binding site" evidence="1">
    <location>
        <position position="205"/>
    </location>
    <ligand>
        <name>substrate</name>
    </ligand>
</feature>
<feature type="binding site" evidence="1">
    <location>
        <position position="321"/>
    </location>
    <ligand>
        <name>substrate</name>
    </ligand>
</feature>
<feature type="site" description="Transition state stabilizer" evidence="1">
    <location>
        <position position="76"/>
    </location>
</feature>
<protein>
    <recommendedName>
        <fullName evidence="1">Uroporphyrinogen decarboxylase</fullName>
        <shortName evidence="1">UPD</shortName>
        <shortName evidence="1">URO-D</shortName>
        <ecNumber evidence="1">4.1.1.37</ecNumber>
    </recommendedName>
</protein>